<gene>
    <name type="primary">rplT</name>
    <name type="ordered locus">BU128</name>
</gene>
<comment type="function">
    <text evidence="1">Binds directly to 23S ribosomal RNA and is necessary for the in vitro assembly process of the 50S ribosomal subunit. It is not involved in the protein synthesizing functions of that subunit (By similarity).</text>
</comment>
<comment type="similarity">
    <text evidence="2">Belongs to the bacterial ribosomal protein bL20 family.</text>
</comment>
<organism>
    <name type="scientific">Buchnera aphidicola subsp. Acyrthosiphon pisum (strain APS)</name>
    <name type="common">Acyrthosiphon pisum symbiotic bacterium</name>
    <dbReference type="NCBI Taxonomy" id="107806"/>
    <lineage>
        <taxon>Bacteria</taxon>
        <taxon>Pseudomonadati</taxon>
        <taxon>Pseudomonadota</taxon>
        <taxon>Gammaproteobacteria</taxon>
        <taxon>Enterobacterales</taxon>
        <taxon>Erwiniaceae</taxon>
        <taxon>Buchnera</taxon>
    </lineage>
</organism>
<protein>
    <recommendedName>
        <fullName evidence="2">Large ribosomal subunit protein bL20</fullName>
    </recommendedName>
    <alternativeName>
        <fullName>50S ribosomal protein L20</fullName>
    </alternativeName>
</protein>
<reference key="1">
    <citation type="journal article" date="2000" name="Nature">
        <title>Genome sequence of the endocellular bacterial symbiont of aphids Buchnera sp. APS.</title>
        <authorList>
            <person name="Shigenobu S."/>
            <person name="Watanabe H."/>
            <person name="Hattori M."/>
            <person name="Sakaki Y."/>
            <person name="Ishikawa H."/>
        </authorList>
    </citation>
    <scope>NUCLEOTIDE SEQUENCE [LARGE SCALE GENOMIC DNA]</scope>
    <source>
        <strain>APS</strain>
    </source>
</reference>
<keyword id="KW-1185">Reference proteome</keyword>
<keyword id="KW-0687">Ribonucleoprotein</keyword>
<keyword id="KW-0689">Ribosomal protein</keyword>
<keyword id="KW-0694">RNA-binding</keyword>
<keyword id="KW-0699">rRNA-binding</keyword>
<dbReference type="EMBL" id="BA000003">
    <property type="protein sequence ID" value="BAB12846.1"/>
    <property type="molecule type" value="Genomic_DNA"/>
</dbReference>
<dbReference type="RefSeq" id="NP_239960.1">
    <property type="nucleotide sequence ID" value="NC_002528.1"/>
</dbReference>
<dbReference type="RefSeq" id="WP_010895962.1">
    <property type="nucleotide sequence ID" value="NZ_AP036055.1"/>
</dbReference>
<dbReference type="SMR" id="P57228"/>
<dbReference type="STRING" id="563178.BUAP5A_126"/>
<dbReference type="EnsemblBacteria" id="BAB12846">
    <property type="protein sequence ID" value="BAB12846"/>
    <property type="gene ID" value="BAB12846"/>
</dbReference>
<dbReference type="KEGG" id="buc:BU128"/>
<dbReference type="PATRIC" id="fig|107806.10.peg.137"/>
<dbReference type="eggNOG" id="COG0292">
    <property type="taxonomic scope" value="Bacteria"/>
</dbReference>
<dbReference type="HOGENOM" id="CLU_123265_0_1_6"/>
<dbReference type="Proteomes" id="UP000001806">
    <property type="component" value="Chromosome"/>
</dbReference>
<dbReference type="GO" id="GO:1990904">
    <property type="term" value="C:ribonucleoprotein complex"/>
    <property type="evidence" value="ECO:0007669"/>
    <property type="project" value="UniProtKB-KW"/>
</dbReference>
<dbReference type="GO" id="GO:0005840">
    <property type="term" value="C:ribosome"/>
    <property type="evidence" value="ECO:0007669"/>
    <property type="project" value="UniProtKB-KW"/>
</dbReference>
<dbReference type="GO" id="GO:0019843">
    <property type="term" value="F:rRNA binding"/>
    <property type="evidence" value="ECO:0007669"/>
    <property type="project" value="UniProtKB-UniRule"/>
</dbReference>
<dbReference type="GO" id="GO:0003735">
    <property type="term" value="F:structural constituent of ribosome"/>
    <property type="evidence" value="ECO:0007669"/>
    <property type="project" value="InterPro"/>
</dbReference>
<dbReference type="GO" id="GO:0000027">
    <property type="term" value="P:ribosomal large subunit assembly"/>
    <property type="evidence" value="ECO:0007669"/>
    <property type="project" value="UniProtKB-UniRule"/>
</dbReference>
<dbReference type="GO" id="GO:0006412">
    <property type="term" value="P:translation"/>
    <property type="evidence" value="ECO:0007669"/>
    <property type="project" value="InterPro"/>
</dbReference>
<dbReference type="CDD" id="cd07026">
    <property type="entry name" value="Ribosomal_L20"/>
    <property type="match status" value="1"/>
</dbReference>
<dbReference type="FunFam" id="1.10.1900.20:FF:000001">
    <property type="entry name" value="50S ribosomal protein L20"/>
    <property type="match status" value="1"/>
</dbReference>
<dbReference type="Gene3D" id="6.10.160.10">
    <property type="match status" value="1"/>
</dbReference>
<dbReference type="Gene3D" id="1.10.1900.20">
    <property type="entry name" value="Ribosomal protein L20"/>
    <property type="match status" value="1"/>
</dbReference>
<dbReference type="HAMAP" id="MF_00382">
    <property type="entry name" value="Ribosomal_bL20"/>
    <property type="match status" value="1"/>
</dbReference>
<dbReference type="InterPro" id="IPR005813">
    <property type="entry name" value="Ribosomal_bL20"/>
</dbReference>
<dbReference type="InterPro" id="IPR049946">
    <property type="entry name" value="RIBOSOMAL_L20_CS"/>
</dbReference>
<dbReference type="InterPro" id="IPR035566">
    <property type="entry name" value="Ribosomal_protein_bL20_C"/>
</dbReference>
<dbReference type="NCBIfam" id="TIGR01032">
    <property type="entry name" value="rplT_bact"/>
    <property type="match status" value="1"/>
</dbReference>
<dbReference type="PANTHER" id="PTHR10986">
    <property type="entry name" value="39S RIBOSOMAL PROTEIN L20"/>
    <property type="match status" value="1"/>
</dbReference>
<dbReference type="Pfam" id="PF00453">
    <property type="entry name" value="Ribosomal_L20"/>
    <property type="match status" value="1"/>
</dbReference>
<dbReference type="PRINTS" id="PR00062">
    <property type="entry name" value="RIBOSOMALL20"/>
</dbReference>
<dbReference type="SUPFAM" id="SSF74731">
    <property type="entry name" value="Ribosomal protein L20"/>
    <property type="match status" value="1"/>
</dbReference>
<dbReference type="PROSITE" id="PS00937">
    <property type="entry name" value="RIBOSOMAL_L20"/>
    <property type="match status" value="1"/>
</dbReference>
<proteinExistence type="inferred from homology"/>
<feature type="initiator methionine" description="Removed" evidence="1">
    <location>
        <position position="1"/>
    </location>
</feature>
<feature type="chain" id="PRO_0000177132" description="Large ribosomal subunit protein bL20">
    <location>
        <begin position="2"/>
        <end position="118"/>
    </location>
</feature>
<evidence type="ECO:0000250" key="1"/>
<evidence type="ECO:0000305" key="2"/>
<accession>P57228</accession>
<name>RL20_BUCAI</name>
<sequence length="118" mass="13777">MARIKRGVIAHARHKKILKQAKGYYGARSRIYRVAHQAVIKAGQYAYRDRRQRKRQFRQLWISRINAAVRQSKMSYSNFIFGLKKASINIDRKILSDIAIFDLLSFNALVKKAKEALL</sequence>